<feature type="chain" id="PRO_0000342933" description="Ribosomal RNA small subunit methyltransferase G">
    <location>
        <begin position="1"/>
        <end position="239"/>
    </location>
</feature>
<feature type="binding site" evidence="1">
    <location>
        <position position="76"/>
    </location>
    <ligand>
        <name>S-adenosyl-L-methionine</name>
        <dbReference type="ChEBI" id="CHEBI:59789"/>
    </ligand>
</feature>
<feature type="binding site" evidence="1">
    <location>
        <position position="81"/>
    </location>
    <ligand>
        <name>S-adenosyl-L-methionine</name>
        <dbReference type="ChEBI" id="CHEBI:59789"/>
    </ligand>
</feature>
<feature type="binding site" evidence="1">
    <location>
        <begin position="99"/>
        <end position="101"/>
    </location>
    <ligand>
        <name>S-adenosyl-L-methionine</name>
        <dbReference type="ChEBI" id="CHEBI:59789"/>
    </ligand>
</feature>
<feature type="binding site" evidence="1">
    <location>
        <begin position="128"/>
        <end position="129"/>
    </location>
    <ligand>
        <name>S-adenosyl-L-methionine</name>
        <dbReference type="ChEBI" id="CHEBI:59789"/>
    </ligand>
</feature>
<feature type="binding site" evidence="1">
    <location>
        <position position="147"/>
    </location>
    <ligand>
        <name>S-adenosyl-L-methionine</name>
        <dbReference type="ChEBI" id="CHEBI:59789"/>
    </ligand>
</feature>
<comment type="function">
    <text evidence="1">Specifically methylates the N7 position of a guanine in 16S rRNA.</text>
</comment>
<comment type="subcellular location">
    <subcellularLocation>
        <location evidence="1">Cytoplasm</location>
    </subcellularLocation>
</comment>
<comment type="similarity">
    <text evidence="1">Belongs to the methyltransferase superfamily. RNA methyltransferase RsmG family.</text>
</comment>
<comment type="sequence caution" evidence="2">
    <conflict type="erroneous initiation">
        <sequence resource="EMBL-CDS" id="ABM72862"/>
    </conflict>
</comment>
<reference key="1">
    <citation type="journal article" date="2007" name="PLoS Genet.">
        <title>Patterns and implications of gene gain and loss in the evolution of Prochlorococcus.</title>
        <authorList>
            <person name="Kettler G.C."/>
            <person name="Martiny A.C."/>
            <person name="Huang K."/>
            <person name="Zucker J."/>
            <person name="Coleman M.L."/>
            <person name="Rodrigue S."/>
            <person name="Chen F."/>
            <person name="Lapidus A."/>
            <person name="Ferriera S."/>
            <person name="Johnson J."/>
            <person name="Steglich C."/>
            <person name="Church G.M."/>
            <person name="Richardson P."/>
            <person name="Chisholm S.W."/>
        </authorList>
    </citation>
    <scope>NUCLEOTIDE SEQUENCE [LARGE SCALE GENOMIC DNA]</scope>
    <source>
        <strain>MIT 9515</strain>
    </source>
</reference>
<proteinExistence type="inferred from homology"/>
<evidence type="ECO:0000255" key="1">
    <source>
        <dbReference type="HAMAP-Rule" id="MF_00074"/>
    </source>
</evidence>
<evidence type="ECO:0000305" key="2"/>
<accession>A2BYK1</accession>
<name>RSMG_PROM5</name>
<gene>
    <name evidence="1" type="primary">rsmG</name>
    <name type="ordered locus">P9515_16551</name>
</gene>
<organism>
    <name type="scientific">Prochlorococcus marinus (strain MIT 9515)</name>
    <dbReference type="NCBI Taxonomy" id="167542"/>
    <lineage>
        <taxon>Bacteria</taxon>
        <taxon>Bacillati</taxon>
        <taxon>Cyanobacteriota</taxon>
        <taxon>Cyanophyceae</taxon>
        <taxon>Synechococcales</taxon>
        <taxon>Prochlorococcaceae</taxon>
        <taxon>Prochlorococcus</taxon>
    </lineage>
</organism>
<protein>
    <recommendedName>
        <fullName evidence="1">Ribosomal RNA small subunit methyltransferase G</fullName>
        <ecNumber evidence="1">2.1.1.-</ecNumber>
    </recommendedName>
    <alternativeName>
        <fullName evidence="1">16S rRNA 7-methylguanosine methyltransferase</fullName>
        <shortName evidence="1">16S rRNA m7G methyltransferase</shortName>
    </alternativeName>
</protein>
<dbReference type="EC" id="2.1.1.-" evidence="1"/>
<dbReference type="EMBL" id="CP000552">
    <property type="protein sequence ID" value="ABM72862.1"/>
    <property type="status" value="ALT_INIT"/>
    <property type="molecule type" value="Genomic_DNA"/>
</dbReference>
<dbReference type="RefSeq" id="WP_041710655.1">
    <property type="nucleotide sequence ID" value="NC_008817.1"/>
</dbReference>
<dbReference type="SMR" id="A2BYK1"/>
<dbReference type="STRING" id="167542.P9515_16551"/>
<dbReference type="GeneID" id="60202100"/>
<dbReference type="KEGG" id="pmc:P9515_16551"/>
<dbReference type="eggNOG" id="COG0357">
    <property type="taxonomic scope" value="Bacteria"/>
</dbReference>
<dbReference type="HOGENOM" id="CLU_065341_0_2_3"/>
<dbReference type="OrthoDB" id="9808773at2"/>
<dbReference type="Proteomes" id="UP000001589">
    <property type="component" value="Chromosome"/>
</dbReference>
<dbReference type="GO" id="GO:0005829">
    <property type="term" value="C:cytosol"/>
    <property type="evidence" value="ECO:0007669"/>
    <property type="project" value="TreeGrafter"/>
</dbReference>
<dbReference type="GO" id="GO:0070043">
    <property type="term" value="F:rRNA (guanine-N7-)-methyltransferase activity"/>
    <property type="evidence" value="ECO:0007669"/>
    <property type="project" value="UniProtKB-UniRule"/>
</dbReference>
<dbReference type="Gene3D" id="3.40.50.150">
    <property type="entry name" value="Vaccinia Virus protein VP39"/>
    <property type="match status" value="1"/>
</dbReference>
<dbReference type="HAMAP" id="MF_00074">
    <property type="entry name" value="16SrRNA_methyltr_G"/>
    <property type="match status" value="1"/>
</dbReference>
<dbReference type="InterPro" id="IPR003682">
    <property type="entry name" value="rRNA_ssu_MeTfrase_G"/>
</dbReference>
<dbReference type="InterPro" id="IPR029063">
    <property type="entry name" value="SAM-dependent_MTases_sf"/>
</dbReference>
<dbReference type="NCBIfam" id="TIGR00138">
    <property type="entry name" value="rsmG_gidB"/>
    <property type="match status" value="1"/>
</dbReference>
<dbReference type="PANTHER" id="PTHR31760">
    <property type="entry name" value="S-ADENOSYL-L-METHIONINE-DEPENDENT METHYLTRANSFERASES SUPERFAMILY PROTEIN"/>
    <property type="match status" value="1"/>
</dbReference>
<dbReference type="PANTHER" id="PTHR31760:SF0">
    <property type="entry name" value="S-ADENOSYL-L-METHIONINE-DEPENDENT METHYLTRANSFERASES SUPERFAMILY PROTEIN"/>
    <property type="match status" value="1"/>
</dbReference>
<dbReference type="Pfam" id="PF02527">
    <property type="entry name" value="GidB"/>
    <property type="match status" value="1"/>
</dbReference>
<dbReference type="SUPFAM" id="SSF53335">
    <property type="entry name" value="S-adenosyl-L-methionine-dependent methyltransferases"/>
    <property type="match status" value="1"/>
</dbReference>
<keyword id="KW-0963">Cytoplasm</keyword>
<keyword id="KW-0489">Methyltransferase</keyword>
<keyword id="KW-0698">rRNA processing</keyword>
<keyword id="KW-0949">S-adenosyl-L-methionine</keyword>
<keyword id="KW-0808">Transferase</keyword>
<sequence>MTKESIPKELLKLITGEEIMMFQELRIRIQELNYKTNLTRLIEGDDYWISQVYDSLWTFKENSKKIFDNKKFIDIGSGCGFPGFAYAITHPNSEIYLVDSSKKKTDSLKEIIKRMNFKNNIFVINDRIENVGRQSSFKKSFNIATARAVSNPSTVAEYILPMLEQNGLGILYCGKWRNEDNKNLENTLNVLEGKIMEIKSKSLPKEKGIRNVIFIKPKASCPDIFPRSIGKAEKYPLKG</sequence>